<comment type="function">
    <text evidence="1">Binds the lower part of the 30S subunit head. Binds mRNA in the 70S ribosome, positioning it for translation.</text>
</comment>
<comment type="subunit">
    <text evidence="1">Part of the 30S ribosomal subunit. Forms a tight complex with proteins S10 and S14.</text>
</comment>
<comment type="similarity">
    <text evidence="1">Belongs to the universal ribosomal protein uS3 family.</text>
</comment>
<organism>
    <name type="scientific">Streptococcus agalactiae serotype V (strain ATCC BAA-611 / 2603 V/R)</name>
    <dbReference type="NCBI Taxonomy" id="208435"/>
    <lineage>
        <taxon>Bacteria</taxon>
        <taxon>Bacillati</taxon>
        <taxon>Bacillota</taxon>
        <taxon>Bacilli</taxon>
        <taxon>Lactobacillales</taxon>
        <taxon>Streptococcaceae</taxon>
        <taxon>Streptococcus</taxon>
    </lineage>
</organism>
<sequence length="217" mass="24134">MGQKVHPIGMRVGIIRDWDAKWYAEKEYADYLHEDLAIRKFINKELADASVSTIEIERAVNKVIVSLHTAKPGMVIGKGGANVDALRGQLNKLTGKQVHINIIEIKQPDLDAHLVGENIARQLEQRVAFRRAQKQAIQRTMRAGAKGIKTQVSGRLNGADIARAEGYSEGTVPLHTLRADIDYAWEEADTTYGKLGVKVWIYRGEVLPARKNTKGGK</sequence>
<protein>
    <recommendedName>
        <fullName evidence="1">Small ribosomal subunit protein uS3</fullName>
    </recommendedName>
    <alternativeName>
        <fullName evidence="2">30S ribosomal protein S3</fullName>
    </alternativeName>
</protein>
<name>RS3_STRA5</name>
<accession>P66559</accession>
<accession>P59185</accession>
<accession>Q8K8X2</accession>
<accession>Q9A1W8</accession>
<proteinExistence type="inferred from homology"/>
<feature type="chain" id="PRO_0000130215" description="Small ribosomal subunit protein uS3">
    <location>
        <begin position="1"/>
        <end position="217"/>
    </location>
</feature>
<feature type="domain" description="KH type-2" evidence="1">
    <location>
        <begin position="38"/>
        <end position="106"/>
    </location>
</feature>
<keyword id="KW-1185">Reference proteome</keyword>
<keyword id="KW-0687">Ribonucleoprotein</keyword>
<keyword id="KW-0689">Ribosomal protein</keyword>
<keyword id="KW-0694">RNA-binding</keyword>
<keyword id="KW-0699">rRNA-binding</keyword>
<evidence type="ECO:0000255" key="1">
    <source>
        <dbReference type="HAMAP-Rule" id="MF_01309"/>
    </source>
</evidence>
<evidence type="ECO:0000305" key="2"/>
<gene>
    <name evidence="1" type="primary">rpsC</name>
    <name type="ordered locus">SAG0064</name>
</gene>
<dbReference type="EMBL" id="AE009948">
    <property type="protein sequence ID" value="AAM98972.1"/>
    <property type="molecule type" value="Genomic_DNA"/>
</dbReference>
<dbReference type="RefSeq" id="NP_687100.1">
    <property type="nucleotide sequence ID" value="NC_004116.1"/>
</dbReference>
<dbReference type="RefSeq" id="WP_000529929.1">
    <property type="nucleotide sequence ID" value="NC_004116.1"/>
</dbReference>
<dbReference type="SMR" id="P66559"/>
<dbReference type="STRING" id="208435.SAG0064"/>
<dbReference type="GeneID" id="69900032"/>
<dbReference type="KEGG" id="sag:SAG0064"/>
<dbReference type="PATRIC" id="fig|208435.3.peg.63"/>
<dbReference type="HOGENOM" id="CLU_058591_0_2_9"/>
<dbReference type="OrthoDB" id="9806396at2"/>
<dbReference type="Proteomes" id="UP000000821">
    <property type="component" value="Chromosome"/>
</dbReference>
<dbReference type="GO" id="GO:0022627">
    <property type="term" value="C:cytosolic small ribosomal subunit"/>
    <property type="evidence" value="ECO:0007669"/>
    <property type="project" value="TreeGrafter"/>
</dbReference>
<dbReference type="GO" id="GO:0003729">
    <property type="term" value="F:mRNA binding"/>
    <property type="evidence" value="ECO:0007669"/>
    <property type="project" value="UniProtKB-UniRule"/>
</dbReference>
<dbReference type="GO" id="GO:0019843">
    <property type="term" value="F:rRNA binding"/>
    <property type="evidence" value="ECO:0007669"/>
    <property type="project" value="UniProtKB-UniRule"/>
</dbReference>
<dbReference type="GO" id="GO:0003735">
    <property type="term" value="F:structural constituent of ribosome"/>
    <property type="evidence" value="ECO:0007669"/>
    <property type="project" value="InterPro"/>
</dbReference>
<dbReference type="GO" id="GO:0006412">
    <property type="term" value="P:translation"/>
    <property type="evidence" value="ECO:0007669"/>
    <property type="project" value="UniProtKB-UniRule"/>
</dbReference>
<dbReference type="CDD" id="cd02412">
    <property type="entry name" value="KH-II_30S_S3"/>
    <property type="match status" value="1"/>
</dbReference>
<dbReference type="FunFam" id="3.30.1140.32:FF:000001">
    <property type="entry name" value="30S ribosomal protein S3"/>
    <property type="match status" value="1"/>
</dbReference>
<dbReference type="FunFam" id="3.30.300.20:FF:000001">
    <property type="entry name" value="30S ribosomal protein S3"/>
    <property type="match status" value="1"/>
</dbReference>
<dbReference type="Gene3D" id="3.30.300.20">
    <property type="match status" value="1"/>
</dbReference>
<dbReference type="Gene3D" id="3.30.1140.32">
    <property type="entry name" value="Ribosomal protein S3, C-terminal domain"/>
    <property type="match status" value="1"/>
</dbReference>
<dbReference type="HAMAP" id="MF_01309_B">
    <property type="entry name" value="Ribosomal_uS3_B"/>
    <property type="match status" value="1"/>
</dbReference>
<dbReference type="InterPro" id="IPR004087">
    <property type="entry name" value="KH_dom"/>
</dbReference>
<dbReference type="InterPro" id="IPR015946">
    <property type="entry name" value="KH_dom-like_a/b"/>
</dbReference>
<dbReference type="InterPro" id="IPR004044">
    <property type="entry name" value="KH_dom_type_2"/>
</dbReference>
<dbReference type="InterPro" id="IPR009019">
    <property type="entry name" value="KH_sf_prok-type"/>
</dbReference>
<dbReference type="InterPro" id="IPR036419">
    <property type="entry name" value="Ribosomal_S3_C_sf"/>
</dbReference>
<dbReference type="InterPro" id="IPR005704">
    <property type="entry name" value="Ribosomal_uS3_bac-typ"/>
</dbReference>
<dbReference type="InterPro" id="IPR001351">
    <property type="entry name" value="Ribosomal_uS3_C"/>
</dbReference>
<dbReference type="InterPro" id="IPR018280">
    <property type="entry name" value="Ribosomal_uS3_CS"/>
</dbReference>
<dbReference type="NCBIfam" id="TIGR01009">
    <property type="entry name" value="rpsC_bact"/>
    <property type="match status" value="1"/>
</dbReference>
<dbReference type="PANTHER" id="PTHR11760">
    <property type="entry name" value="30S/40S RIBOSOMAL PROTEIN S3"/>
    <property type="match status" value="1"/>
</dbReference>
<dbReference type="PANTHER" id="PTHR11760:SF19">
    <property type="entry name" value="SMALL RIBOSOMAL SUBUNIT PROTEIN US3C"/>
    <property type="match status" value="1"/>
</dbReference>
<dbReference type="Pfam" id="PF07650">
    <property type="entry name" value="KH_2"/>
    <property type="match status" value="1"/>
</dbReference>
<dbReference type="Pfam" id="PF00189">
    <property type="entry name" value="Ribosomal_S3_C"/>
    <property type="match status" value="1"/>
</dbReference>
<dbReference type="SMART" id="SM00322">
    <property type="entry name" value="KH"/>
    <property type="match status" value="1"/>
</dbReference>
<dbReference type="SUPFAM" id="SSF54814">
    <property type="entry name" value="Prokaryotic type KH domain (KH-domain type II)"/>
    <property type="match status" value="1"/>
</dbReference>
<dbReference type="SUPFAM" id="SSF54821">
    <property type="entry name" value="Ribosomal protein S3 C-terminal domain"/>
    <property type="match status" value="1"/>
</dbReference>
<dbReference type="PROSITE" id="PS50823">
    <property type="entry name" value="KH_TYPE_2"/>
    <property type="match status" value="1"/>
</dbReference>
<dbReference type="PROSITE" id="PS00548">
    <property type="entry name" value="RIBOSOMAL_S3"/>
    <property type="match status" value="1"/>
</dbReference>
<reference key="1">
    <citation type="journal article" date="2002" name="Proc. Natl. Acad. Sci. U.S.A.">
        <title>Complete genome sequence and comparative genomic analysis of an emerging human pathogen, serotype V Streptococcus agalactiae.</title>
        <authorList>
            <person name="Tettelin H."/>
            <person name="Masignani V."/>
            <person name="Cieslewicz M.J."/>
            <person name="Eisen J.A."/>
            <person name="Peterson S.N."/>
            <person name="Wessels M.R."/>
            <person name="Paulsen I.T."/>
            <person name="Nelson K.E."/>
            <person name="Margarit I."/>
            <person name="Read T.D."/>
            <person name="Madoff L.C."/>
            <person name="Wolf A.M."/>
            <person name="Beanan M.J."/>
            <person name="Brinkac L.M."/>
            <person name="Daugherty S.C."/>
            <person name="DeBoy R.T."/>
            <person name="Durkin A.S."/>
            <person name="Kolonay J.F."/>
            <person name="Madupu R."/>
            <person name="Lewis M.R."/>
            <person name="Radune D."/>
            <person name="Fedorova N.B."/>
            <person name="Scanlan D."/>
            <person name="Khouri H.M."/>
            <person name="Mulligan S."/>
            <person name="Carty H.A."/>
            <person name="Cline R.T."/>
            <person name="Van Aken S.E."/>
            <person name="Gill J."/>
            <person name="Scarselli M."/>
            <person name="Mora M."/>
            <person name="Iacobini E.T."/>
            <person name="Brettoni C."/>
            <person name="Galli G."/>
            <person name="Mariani M."/>
            <person name="Vegni F."/>
            <person name="Maione D."/>
            <person name="Rinaudo D."/>
            <person name="Rappuoli R."/>
            <person name="Telford J.L."/>
            <person name="Kasper D.L."/>
            <person name="Grandi G."/>
            <person name="Fraser C.M."/>
        </authorList>
    </citation>
    <scope>NUCLEOTIDE SEQUENCE [LARGE SCALE GENOMIC DNA]</scope>
    <source>
        <strain>ATCC BAA-611 / 2603 V/R</strain>
    </source>
</reference>